<comment type="catalytic activity">
    <reaction evidence="1">
        <text>(S)-4-amino-5-oxopentanoate = 5-aminolevulinate</text>
        <dbReference type="Rhea" id="RHEA:14265"/>
        <dbReference type="ChEBI" id="CHEBI:57501"/>
        <dbReference type="ChEBI" id="CHEBI:356416"/>
        <dbReference type="EC" id="5.4.3.8"/>
    </reaction>
</comment>
<comment type="cofactor">
    <cofactor evidence="1">
        <name>pyridoxal 5'-phosphate</name>
        <dbReference type="ChEBI" id="CHEBI:597326"/>
    </cofactor>
</comment>
<comment type="pathway">
    <text evidence="1">Porphyrin-containing compound metabolism; protoporphyrin-IX biosynthesis; 5-aminolevulinate from L-glutamyl-tRNA(Glu): step 2/2.</text>
</comment>
<comment type="subunit">
    <text evidence="1">Homodimer.</text>
</comment>
<comment type="subcellular location">
    <subcellularLocation>
        <location evidence="1">Cytoplasm</location>
    </subcellularLocation>
</comment>
<comment type="similarity">
    <text evidence="1">Belongs to the class-III pyridoxal-phosphate-dependent aminotransferase family. HemL subfamily.</text>
</comment>
<comment type="sequence caution" evidence="2">
    <conflict type="erroneous initiation">
        <sequence resource="EMBL-CDS" id="AAF10132"/>
    </conflict>
</comment>
<gene>
    <name evidence="1" type="primary">hemL</name>
    <name type="ordered locus">DR_0555</name>
</gene>
<feature type="chain" id="PRO_0000120407" description="Glutamate-1-semialdehyde 2,1-aminomutase">
    <location>
        <begin position="1"/>
        <end position="444"/>
    </location>
</feature>
<feature type="modified residue" description="N6-(pyridoxal phosphate)lysine" evidence="1">
    <location>
        <position position="278"/>
    </location>
</feature>
<evidence type="ECO:0000255" key="1">
    <source>
        <dbReference type="HAMAP-Rule" id="MF_00375"/>
    </source>
</evidence>
<evidence type="ECO:0000305" key="2"/>
<organism>
    <name type="scientific">Deinococcus radiodurans (strain ATCC 13939 / DSM 20539 / JCM 16871 / CCUG 27074 / LMG 4051 / NBRC 15346 / NCIMB 9279 / VKM B-1422 / R1)</name>
    <dbReference type="NCBI Taxonomy" id="243230"/>
    <lineage>
        <taxon>Bacteria</taxon>
        <taxon>Thermotogati</taxon>
        <taxon>Deinococcota</taxon>
        <taxon>Deinococci</taxon>
        <taxon>Deinococcales</taxon>
        <taxon>Deinococcaceae</taxon>
        <taxon>Deinococcus</taxon>
    </lineage>
</organism>
<sequence length="444" mass="46305">MTLSETHPTARSEALFVRARAVTPGGVNSPVRAFRSVGGVPRFIASAQGAYLTDADGARYLDYIGSWGPMILGHNHPAVRDAVAQALASGTSFGAPNEREVELAELIVELTGAERVRFVSSGTEATMSALRLARGYTGRKFIVKFRGNYHGHADGLLVEAGSGLLTNAEGDLGAAAPSSAGVPEEYAGLTLVLDYNDPEALDALMAQRGDEIAAVIFEPVVGNAGVLIPTSDFLAALHRVRDFGAVLIADEVMTGFRLSLNGATGLLSLDPDLRCWGKIVGGGLPVGAYGGRADIMDFVSPQGPVYQAGTLSGNPLAMAAGIATLRELKANPGLYRQLDEYAARLAAGLRGAAERAGVAVSINHIGSMLTVFFQDAPDGSVRDYAAAARSDTAAFAAWFQGLLARGIYWAPSQFESIFISAAHGEPELAATLEAAAQAFEGVKP</sequence>
<accession>Q9RWW0</accession>
<keyword id="KW-0963">Cytoplasm</keyword>
<keyword id="KW-0413">Isomerase</keyword>
<keyword id="KW-0627">Porphyrin biosynthesis</keyword>
<keyword id="KW-0663">Pyridoxal phosphate</keyword>
<keyword id="KW-1185">Reference proteome</keyword>
<protein>
    <recommendedName>
        <fullName evidence="1">Glutamate-1-semialdehyde 2,1-aminomutase</fullName>
        <shortName evidence="1">GSA</shortName>
        <ecNumber evidence="1">5.4.3.8</ecNumber>
    </recommendedName>
    <alternativeName>
        <fullName evidence="1">Glutamate-1-semialdehyde aminotransferase</fullName>
        <shortName evidence="1">GSA-AT</shortName>
    </alternativeName>
</protein>
<name>GSA_DEIRA</name>
<dbReference type="EC" id="5.4.3.8" evidence="1"/>
<dbReference type="EMBL" id="AE000513">
    <property type="protein sequence ID" value="AAF10132.1"/>
    <property type="status" value="ALT_INIT"/>
    <property type="molecule type" value="Genomic_DNA"/>
</dbReference>
<dbReference type="PIR" id="E75505">
    <property type="entry name" value="E75505"/>
</dbReference>
<dbReference type="RefSeq" id="NP_294278.1">
    <property type="nucleotide sequence ID" value="NC_001263.1"/>
</dbReference>
<dbReference type="RefSeq" id="WP_027479528.1">
    <property type="nucleotide sequence ID" value="NC_001263.1"/>
</dbReference>
<dbReference type="SMR" id="Q9RWW0"/>
<dbReference type="FunCoup" id="Q9RWW0">
    <property type="interactions" value="440"/>
</dbReference>
<dbReference type="STRING" id="243230.DR_0555"/>
<dbReference type="PaxDb" id="243230-DR_0555"/>
<dbReference type="EnsemblBacteria" id="AAF10132">
    <property type="protein sequence ID" value="AAF10132"/>
    <property type="gene ID" value="DR_0555"/>
</dbReference>
<dbReference type="GeneID" id="69516793"/>
<dbReference type="KEGG" id="dra:DR_0555"/>
<dbReference type="PATRIC" id="fig|243230.17.peg.730"/>
<dbReference type="eggNOG" id="COG0001">
    <property type="taxonomic scope" value="Bacteria"/>
</dbReference>
<dbReference type="HOGENOM" id="CLU_016922_1_5_0"/>
<dbReference type="InParanoid" id="Q9RWW0"/>
<dbReference type="OrthoDB" id="9801052at2"/>
<dbReference type="UniPathway" id="UPA00251">
    <property type="reaction ID" value="UER00317"/>
</dbReference>
<dbReference type="Proteomes" id="UP000002524">
    <property type="component" value="Chromosome 1"/>
</dbReference>
<dbReference type="GO" id="GO:0005737">
    <property type="term" value="C:cytoplasm"/>
    <property type="evidence" value="ECO:0007669"/>
    <property type="project" value="UniProtKB-SubCell"/>
</dbReference>
<dbReference type="GO" id="GO:0042286">
    <property type="term" value="F:glutamate-1-semialdehyde 2,1-aminomutase activity"/>
    <property type="evidence" value="ECO:0007669"/>
    <property type="project" value="UniProtKB-UniRule"/>
</dbReference>
<dbReference type="GO" id="GO:0030170">
    <property type="term" value="F:pyridoxal phosphate binding"/>
    <property type="evidence" value="ECO:0007669"/>
    <property type="project" value="InterPro"/>
</dbReference>
<dbReference type="GO" id="GO:0008483">
    <property type="term" value="F:transaminase activity"/>
    <property type="evidence" value="ECO:0007669"/>
    <property type="project" value="InterPro"/>
</dbReference>
<dbReference type="GO" id="GO:0006782">
    <property type="term" value="P:protoporphyrinogen IX biosynthetic process"/>
    <property type="evidence" value="ECO:0007669"/>
    <property type="project" value="UniProtKB-UniRule"/>
</dbReference>
<dbReference type="CDD" id="cd00610">
    <property type="entry name" value="OAT_like"/>
    <property type="match status" value="1"/>
</dbReference>
<dbReference type="FunFam" id="3.40.640.10:FF:000021">
    <property type="entry name" value="Glutamate-1-semialdehyde 2,1-aminomutase"/>
    <property type="match status" value="1"/>
</dbReference>
<dbReference type="Gene3D" id="3.90.1150.10">
    <property type="entry name" value="Aspartate Aminotransferase, domain 1"/>
    <property type="match status" value="1"/>
</dbReference>
<dbReference type="Gene3D" id="3.40.640.10">
    <property type="entry name" value="Type I PLP-dependent aspartate aminotransferase-like (Major domain)"/>
    <property type="match status" value="1"/>
</dbReference>
<dbReference type="HAMAP" id="MF_00375">
    <property type="entry name" value="HemL_aminotrans_3"/>
    <property type="match status" value="1"/>
</dbReference>
<dbReference type="InterPro" id="IPR004639">
    <property type="entry name" value="4pyrrol_synth_GluAld_NH2Trfase"/>
</dbReference>
<dbReference type="InterPro" id="IPR005814">
    <property type="entry name" value="Aminotrans_3"/>
</dbReference>
<dbReference type="InterPro" id="IPR049704">
    <property type="entry name" value="Aminotrans_3_PPA_site"/>
</dbReference>
<dbReference type="InterPro" id="IPR015424">
    <property type="entry name" value="PyrdxlP-dep_Trfase"/>
</dbReference>
<dbReference type="InterPro" id="IPR015421">
    <property type="entry name" value="PyrdxlP-dep_Trfase_major"/>
</dbReference>
<dbReference type="InterPro" id="IPR015422">
    <property type="entry name" value="PyrdxlP-dep_Trfase_small"/>
</dbReference>
<dbReference type="NCBIfam" id="TIGR00713">
    <property type="entry name" value="hemL"/>
    <property type="match status" value="1"/>
</dbReference>
<dbReference type="NCBIfam" id="NF000818">
    <property type="entry name" value="PRK00062.1"/>
    <property type="match status" value="1"/>
</dbReference>
<dbReference type="PANTHER" id="PTHR43713">
    <property type="entry name" value="GLUTAMATE-1-SEMIALDEHYDE 2,1-AMINOMUTASE"/>
    <property type="match status" value="1"/>
</dbReference>
<dbReference type="PANTHER" id="PTHR43713:SF3">
    <property type="entry name" value="GLUTAMATE-1-SEMIALDEHYDE 2,1-AMINOMUTASE 1, CHLOROPLASTIC-RELATED"/>
    <property type="match status" value="1"/>
</dbReference>
<dbReference type="Pfam" id="PF00202">
    <property type="entry name" value="Aminotran_3"/>
    <property type="match status" value="1"/>
</dbReference>
<dbReference type="SUPFAM" id="SSF53383">
    <property type="entry name" value="PLP-dependent transferases"/>
    <property type="match status" value="1"/>
</dbReference>
<dbReference type="PROSITE" id="PS00600">
    <property type="entry name" value="AA_TRANSFER_CLASS_3"/>
    <property type="match status" value="1"/>
</dbReference>
<proteinExistence type="inferred from homology"/>
<reference key="1">
    <citation type="journal article" date="1999" name="Science">
        <title>Genome sequence of the radioresistant bacterium Deinococcus radiodurans R1.</title>
        <authorList>
            <person name="White O."/>
            <person name="Eisen J.A."/>
            <person name="Heidelberg J.F."/>
            <person name="Hickey E.K."/>
            <person name="Peterson J.D."/>
            <person name="Dodson R.J."/>
            <person name="Haft D.H."/>
            <person name="Gwinn M.L."/>
            <person name="Nelson W.C."/>
            <person name="Richardson D.L."/>
            <person name="Moffat K.S."/>
            <person name="Qin H."/>
            <person name="Jiang L."/>
            <person name="Pamphile W."/>
            <person name="Crosby M."/>
            <person name="Shen M."/>
            <person name="Vamathevan J.J."/>
            <person name="Lam P."/>
            <person name="McDonald L.A."/>
            <person name="Utterback T.R."/>
            <person name="Zalewski C."/>
            <person name="Makarova K.S."/>
            <person name="Aravind L."/>
            <person name="Daly M.J."/>
            <person name="Minton K.W."/>
            <person name="Fleischmann R.D."/>
            <person name="Ketchum K.A."/>
            <person name="Nelson K.E."/>
            <person name="Salzberg S.L."/>
            <person name="Smith H.O."/>
            <person name="Venter J.C."/>
            <person name="Fraser C.M."/>
        </authorList>
    </citation>
    <scope>NUCLEOTIDE SEQUENCE [LARGE SCALE GENOMIC DNA]</scope>
    <source>
        <strain>ATCC 13939 / DSM 20539 / JCM 16871 / CCUG 27074 / LMG 4051 / NBRC 15346 / NCIMB 9279 / VKM B-1422 / R1</strain>
    </source>
</reference>